<evidence type="ECO:0000250" key="1"/>
<evidence type="ECO:0000305" key="2"/>
<protein>
    <recommendedName>
        <fullName>Cell division control protein 42 homolog</fullName>
    </recommendedName>
</protein>
<keyword id="KW-0131">Cell cycle</keyword>
<keyword id="KW-0132">Cell division</keyword>
<keyword id="KW-1003">Cell membrane</keyword>
<keyword id="KW-0342">GTP-binding</keyword>
<keyword id="KW-0449">Lipoprotein</keyword>
<keyword id="KW-0472">Membrane</keyword>
<keyword id="KW-0488">Methylation</keyword>
<keyword id="KW-0547">Nucleotide-binding</keyword>
<keyword id="KW-0636">Prenylation</keyword>
<keyword id="KW-1185">Reference proteome</keyword>
<keyword id="KW-0843">Virulence</keyword>
<sequence>MQTIKCVVVGDGAVGKTCLLISYTTSKFPADYVPTVFDNYAVTVMIGDEPFTLGLFDTAGQEDYDRLRPLSYPSTDVFLVCFSVISPASFENVKEKWFPEVHHHCPGVPIIIVGTQTDLRNDDVILQRLHRQKLSPITQEQGEKLAKELRAVKYVECSALTQRGLKTVFDEAIVAALEPPVIKKSKKCTIL</sequence>
<organism>
    <name type="scientific">Candida albicans (strain SC5314 / ATCC MYA-2876)</name>
    <name type="common">Yeast</name>
    <dbReference type="NCBI Taxonomy" id="237561"/>
    <lineage>
        <taxon>Eukaryota</taxon>
        <taxon>Fungi</taxon>
        <taxon>Dikarya</taxon>
        <taxon>Ascomycota</taxon>
        <taxon>Saccharomycotina</taxon>
        <taxon>Pichiomycetes</taxon>
        <taxon>Debaryomycetaceae</taxon>
        <taxon>Candida/Lodderomyces clade</taxon>
        <taxon>Candida</taxon>
    </lineage>
</organism>
<feature type="chain" id="PRO_0000198952" description="Cell division control protein 42 homolog">
    <location>
        <begin position="1"/>
        <end position="188"/>
    </location>
</feature>
<feature type="propeptide" id="PRO_0000281282" description="Removed in mature form" evidence="1">
    <location>
        <begin position="189"/>
        <end position="191"/>
    </location>
</feature>
<feature type="short sequence motif" description="Effector region" evidence="1">
    <location>
        <begin position="32"/>
        <end position="40"/>
    </location>
</feature>
<feature type="binding site" evidence="1">
    <location>
        <begin position="10"/>
        <end position="17"/>
    </location>
    <ligand>
        <name>GTP</name>
        <dbReference type="ChEBI" id="CHEBI:37565"/>
    </ligand>
</feature>
<feature type="binding site" evidence="1">
    <location>
        <begin position="57"/>
        <end position="61"/>
    </location>
    <ligand>
        <name>GTP</name>
        <dbReference type="ChEBI" id="CHEBI:37565"/>
    </ligand>
</feature>
<feature type="binding site" evidence="1">
    <location>
        <begin position="115"/>
        <end position="118"/>
    </location>
    <ligand>
        <name>GTP</name>
        <dbReference type="ChEBI" id="CHEBI:37565"/>
    </ligand>
</feature>
<feature type="modified residue" description="Cysteine methyl ester" evidence="1">
    <location>
        <position position="188"/>
    </location>
</feature>
<feature type="lipid moiety-binding region" description="S-geranylgeranyl cysteine" evidence="1">
    <location>
        <position position="188"/>
    </location>
</feature>
<gene>
    <name type="primary">CDC42</name>
    <name type="ordered locus">CAALFM_C108450CA</name>
    <name type="ORF">CaO19.390</name>
    <name type="ORF">CaO19.8020</name>
</gene>
<proteinExistence type="inferred from homology"/>
<reference key="1">
    <citation type="journal article" date="2004" name="Proc. Natl. Acad. Sci. U.S.A.">
        <title>The diploid genome sequence of Candida albicans.</title>
        <authorList>
            <person name="Jones T."/>
            <person name="Federspiel N.A."/>
            <person name="Chibana H."/>
            <person name="Dungan J."/>
            <person name="Kalman S."/>
            <person name="Magee B.B."/>
            <person name="Newport G."/>
            <person name="Thorstenson Y.R."/>
            <person name="Agabian N."/>
            <person name="Magee P.T."/>
            <person name="Davis R.W."/>
            <person name="Scherer S."/>
        </authorList>
    </citation>
    <scope>NUCLEOTIDE SEQUENCE [LARGE SCALE GENOMIC DNA]</scope>
    <source>
        <strain>SC5314 / ATCC MYA-2876</strain>
    </source>
</reference>
<reference key="2">
    <citation type="journal article" date="2007" name="Genome Biol.">
        <title>Assembly of the Candida albicans genome into sixteen supercontigs aligned on the eight chromosomes.</title>
        <authorList>
            <person name="van het Hoog M."/>
            <person name="Rast T.J."/>
            <person name="Martchenko M."/>
            <person name="Grindle S."/>
            <person name="Dignard D."/>
            <person name="Hogues H."/>
            <person name="Cuomo C."/>
            <person name="Berriman M."/>
            <person name="Scherer S."/>
            <person name="Magee B.B."/>
            <person name="Whiteway M."/>
            <person name="Chibana H."/>
            <person name="Nantel A."/>
            <person name="Magee P.T."/>
        </authorList>
    </citation>
    <scope>GENOME REANNOTATION</scope>
    <source>
        <strain>SC5314 / ATCC MYA-2876</strain>
    </source>
</reference>
<reference key="3">
    <citation type="journal article" date="2013" name="Genome Biol.">
        <title>Assembly of a phased diploid Candida albicans genome facilitates allele-specific measurements and provides a simple model for repeat and indel structure.</title>
        <authorList>
            <person name="Muzzey D."/>
            <person name="Schwartz K."/>
            <person name="Weissman J.S."/>
            <person name="Sherlock G."/>
        </authorList>
    </citation>
    <scope>NUCLEOTIDE SEQUENCE [LARGE SCALE GENOMIC DNA]</scope>
    <scope>GENOME REANNOTATION</scope>
    <source>
        <strain>SC5314 / ATCC MYA-2876</strain>
    </source>
</reference>
<name>CDC42_CANAL</name>
<accession>P0CY33</accession>
<accession>A0A1D8PED3</accession>
<accession>O14426</accession>
<accession>Q59QC8</accession>
<dbReference type="EMBL" id="CP017623">
    <property type="protein sequence ID" value="AOW26483.1"/>
    <property type="molecule type" value="Genomic_DNA"/>
</dbReference>
<dbReference type="RefSeq" id="XP_711878.1">
    <property type="nucleotide sequence ID" value="XM_706785.2"/>
</dbReference>
<dbReference type="BMRB" id="P0CY33"/>
<dbReference type="SMR" id="P0CY33"/>
<dbReference type="BioGRID" id="1229572">
    <property type="interactions" value="7"/>
</dbReference>
<dbReference type="FunCoup" id="P0CY33">
    <property type="interactions" value="951"/>
</dbReference>
<dbReference type="IntAct" id="P0CY33">
    <property type="interactions" value="1"/>
</dbReference>
<dbReference type="MINT" id="P0CY33"/>
<dbReference type="STRING" id="237561.P0CY33"/>
<dbReference type="EnsemblFungi" id="C1_08450C_A-T">
    <property type="protein sequence ID" value="C1_08450C_A-T-p1"/>
    <property type="gene ID" value="C1_08450C_A"/>
</dbReference>
<dbReference type="GeneID" id="3646488"/>
<dbReference type="KEGG" id="cal:CAALFM_C108450CA"/>
<dbReference type="CGD" id="CAL0000192612">
    <property type="gene designation" value="CDC42"/>
</dbReference>
<dbReference type="VEuPathDB" id="FungiDB:C1_08450C_A"/>
<dbReference type="eggNOG" id="KOG0393">
    <property type="taxonomic scope" value="Eukaryota"/>
</dbReference>
<dbReference type="HOGENOM" id="CLU_041217_21_3_1"/>
<dbReference type="InParanoid" id="P0CY33"/>
<dbReference type="OMA" id="PRHKDVT"/>
<dbReference type="OrthoDB" id="8830751at2759"/>
<dbReference type="PRO" id="PR:P0CY33"/>
<dbReference type="Proteomes" id="UP000000559">
    <property type="component" value="Chromosome 1"/>
</dbReference>
<dbReference type="GO" id="GO:0030428">
    <property type="term" value="C:cell septum"/>
    <property type="evidence" value="ECO:0000303"/>
    <property type="project" value="CGD"/>
</dbReference>
<dbReference type="GO" id="GO:0005935">
    <property type="term" value="C:cellular bud neck"/>
    <property type="evidence" value="ECO:0000314"/>
    <property type="project" value="CGD"/>
</dbReference>
<dbReference type="GO" id="GO:0005934">
    <property type="term" value="C:cellular bud tip"/>
    <property type="evidence" value="ECO:0000314"/>
    <property type="project" value="CGD"/>
</dbReference>
<dbReference type="GO" id="GO:1903561">
    <property type="term" value="C:extracellular vesicle"/>
    <property type="evidence" value="ECO:0000314"/>
    <property type="project" value="CGD"/>
</dbReference>
<dbReference type="GO" id="GO:0000329">
    <property type="term" value="C:fungal-type vacuole membrane"/>
    <property type="evidence" value="ECO:0007669"/>
    <property type="project" value="EnsemblFungi"/>
</dbReference>
<dbReference type="GO" id="GO:0001411">
    <property type="term" value="C:hyphal tip"/>
    <property type="evidence" value="ECO:0000314"/>
    <property type="project" value="CGD"/>
</dbReference>
<dbReference type="GO" id="GO:0031562">
    <property type="term" value="C:hyphal tip polarisome"/>
    <property type="evidence" value="ECO:0000314"/>
    <property type="project" value="CGD"/>
</dbReference>
<dbReference type="GO" id="GO:0000131">
    <property type="term" value="C:incipient cellular bud site"/>
    <property type="evidence" value="ECO:0007669"/>
    <property type="project" value="EnsemblFungi"/>
</dbReference>
<dbReference type="GO" id="GO:0043332">
    <property type="term" value="C:mating projection tip"/>
    <property type="evidence" value="ECO:0007669"/>
    <property type="project" value="EnsemblFungi"/>
</dbReference>
<dbReference type="GO" id="GO:0016020">
    <property type="term" value="C:membrane"/>
    <property type="evidence" value="ECO:0000315"/>
    <property type="project" value="CGD"/>
</dbReference>
<dbReference type="GO" id="GO:0031965">
    <property type="term" value="C:nuclear membrane"/>
    <property type="evidence" value="ECO:0007669"/>
    <property type="project" value="EnsemblFungi"/>
</dbReference>
<dbReference type="GO" id="GO:0005886">
    <property type="term" value="C:plasma membrane"/>
    <property type="evidence" value="ECO:0000318"/>
    <property type="project" value="GO_Central"/>
</dbReference>
<dbReference type="GO" id="GO:0005940">
    <property type="term" value="C:septin ring"/>
    <property type="evidence" value="ECO:0007669"/>
    <property type="project" value="EnsemblFungi"/>
</dbReference>
<dbReference type="GO" id="GO:0031521">
    <property type="term" value="C:spitzenkorper"/>
    <property type="evidence" value="ECO:0000314"/>
    <property type="project" value="CGD"/>
</dbReference>
<dbReference type="GO" id="GO:0005525">
    <property type="term" value="F:GTP binding"/>
    <property type="evidence" value="ECO:0000314"/>
    <property type="project" value="CGD"/>
</dbReference>
<dbReference type="GO" id="GO:0003924">
    <property type="term" value="F:GTPase activity"/>
    <property type="evidence" value="ECO:0000318"/>
    <property type="project" value="GO_Central"/>
</dbReference>
<dbReference type="GO" id="GO:0019901">
    <property type="term" value="F:protein kinase binding"/>
    <property type="evidence" value="ECO:0000318"/>
    <property type="project" value="GO_Central"/>
</dbReference>
<dbReference type="GO" id="GO:0007015">
    <property type="term" value="P:actin filament organization"/>
    <property type="evidence" value="ECO:0000318"/>
    <property type="project" value="GO_Central"/>
</dbReference>
<dbReference type="GO" id="GO:0007118">
    <property type="term" value="P:budding cell apical bud growth"/>
    <property type="evidence" value="ECO:0007669"/>
    <property type="project" value="EnsemblFungi"/>
</dbReference>
<dbReference type="GO" id="GO:0007119">
    <property type="term" value="P:budding cell isotropic bud growth"/>
    <property type="evidence" value="ECO:0007669"/>
    <property type="project" value="EnsemblFungi"/>
</dbReference>
<dbReference type="GO" id="GO:0007114">
    <property type="term" value="P:cell budding"/>
    <property type="evidence" value="ECO:0000315"/>
    <property type="project" value="CGD"/>
</dbReference>
<dbReference type="GO" id="GO:0036187">
    <property type="term" value="P:cell growth mode switching, budding to filamentous"/>
    <property type="evidence" value="ECO:0000315"/>
    <property type="project" value="CGD"/>
</dbReference>
<dbReference type="GO" id="GO:0000902">
    <property type="term" value="P:cell morphogenesis"/>
    <property type="evidence" value="ECO:0000315"/>
    <property type="project" value="CGD"/>
</dbReference>
<dbReference type="GO" id="GO:0000747">
    <property type="term" value="P:conjugation with cellular fusion"/>
    <property type="evidence" value="ECO:0007669"/>
    <property type="project" value="EnsemblFungi"/>
</dbReference>
<dbReference type="GO" id="GO:0006897">
    <property type="term" value="P:endocytosis"/>
    <property type="evidence" value="ECO:0000318"/>
    <property type="project" value="GO_Central"/>
</dbReference>
<dbReference type="GO" id="GO:0030010">
    <property type="term" value="P:establishment of cell polarity"/>
    <property type="evidence" value="ECO:0000315"/>
    <property type="project" value="CGD"/>
</dbReference>
<dbReference type="GO" id="GO:0030447">
    <property type="term" value="P:filamentous growth"/>
    <property type="evidence" value="ECO:0000315"/>
    <property type="project" value="CGD"/>
</dbReference>
<dbReference type="GO" id="GO:0044182">
    <property type="term" value="P:filamentous growth of a population of unicellular organisms"/>
    <property type="evidence" value="ECO:0000315"/>
    <property type="project" value="CGD"/>
</dbReference>
<dbReference type="GO" id="GO:0036180">
    <property type="term" value="P:filamentous growth of a population of unicellular organisms in response to biotic stimulus"/>
    <property type="evidence" value="ECO:0000315"/>
    <property type="project" value="CGD"/>
</dbReference>
<dbReference type="GO" id="GO:0030448">
    <property type="term" value="P:hyphal growth"/>
    <property type="evidence" value="ECO:0000315"/>
    <property type="project" value="CGD"/>
</dbReference>
<dbReference type="GO" id="GO:0001403">
    <property type="term" value="P:invasive growth in response to glucose limitation"/>
    <property type="evidence" value="ECO:0007669"/>
    <property type="project" value="EnsemblFungi"/>
</dbReference>
<dbReference type="GO" id="GO:0071763">
    <property type="term" value="P:nuclear membrane organization"/>
    <property type="evidence" value="ECO:0007669"/>
    <property type="project" value="EnsemblFungi"/>
</dbReference>
<dbReference type="GO" id="GO:0000750">
    <property type="term" value="P:pheromone-dependent signal transduction involved in conjugation with cellular fusion"/>
    <property type="evidence" value="ECO:0007669"/>
    <property type="project" value="EnsemblFungi"/>
</dbReference>
<dbReference type="GO" id="GO:0045921">
    <property type="term" value="P:positive regulation of exocytosis"/>
    <property type="evidence" value="ECO:0007669"/>
    <property type="project" value="EnsemblFungi"/>
</dbReference>
<dbReference type="GO" id="GO:1900445">
    <property type="term" value="P:positive regulation of filamentous growth of a population of unicellular organisms in response to biotic stimulus"/>
    <property type="evidence" value="ECO:0000315"/>
    <property type="project" value="CGD"/>
</dbReference>
<dbReference type="GO" id="GO:2000222">
    <property type="term" value="P:positive regulation of pseudohyphal growth"/>
    <property type="evidence" value="ECO:0007669"/>
    <property type="project" value="EnsemblFungi"/>
</dbReference>
<dbReference type="GO" id="GO:0001558">
    <property type="term" value="P:regulation of cell growth"/>
    <property type="evidence" value="ECO:0000315"/>
    <property type="project" value="CGD"/>
</dbReference>
<dbReference type="GO" id="GO:0022604">
    <property type="term" value="P:regulation of cell morphogenesis"/>
    <property type="evidence" value="ECO:0007669"/>
    <property type="project" value="EnsemblFungi"/>
</dbReference>
<dbReference type="GO" id="GO:0007096">
    <property type="term" value="P:regulation of exit from mitosis"/>
    <property type="evidence" value="ECO:0007669"/>
    <property type="project" value="EnsemblFungi"/>
</dbReference>
<dbReference type="GO" id="GO:0060178">
    <property type="term" value="P:regulation of exocyst localization"/>
    <property type="evidence" value="ECO:0007669"/>
    <property type="project" value="EnsemblFungi"/>
</dbReference>
<dbReference type="GO" id="GO:0032889">
    <property type="term" value="P:regulation of vacuole fusion, non-autophagic"/>
    <property type="evidence" value="ECO:0007669"/>
    <property type="project" value="EnsemblFungi"/>
</dbReference>
<dbReference type="GO" id="GO:0007266">
    <property type="term" value="P:Rho protein signal transduction"/>
    <property type="evidence" value="ECO:0007669"/>
    <property type="project" value="EnsemblFungi"/>
</dbReference>
<dbReference type="GO" id="GO:0031106">
    <property type="term" value="P:septin ring organization"/>
    <property type="evidence" value="ECO:0007669"/>
    <property type="project" value="EnsemblFungi"/>
</dbReference>
<dbReference type="GO" id="GO:0000920">
    <property type="term" value="P:septum digestion after cytokinesis"/>
    <property type="evidence" value="ECO:0000315"/>
    <property type="project" value="CGD"/>
</dbReference>
<dbReference type="GO" id="GO:0007165">
    <property type="term" value="P:signal transduction"/>
    <property type="evidence" value="ECO:0000318"/>
    <property type="project" value="GO_Central"/>
</dbReference>
<dbReference type="CDD" id="cd01874">
    <property type="entry name" value="Cdc42"/>
    <property type="match status" value="1"/>
</dbReference>
<dbReference type="FunFam" id="3.40.50.300:FF:000236">
    <property type="entry name" value="Cell division control protein 42"/>
    <property type="match status" value="1"/>
</dbReference>
<dbReference type="Gene3D" id="3.40.50.300">
    <property type="entry name" value="P-loop containing nucleotide triphosphate hydrolases"/>
    <property type="match status" value="1"/>
</dbReference>
<dbReference type="InterPro" id="IPR037874">
    <property type="entry name" value="Cdc42"/>
</dbReference>
<dbReference type="InterPro" id="IPR027417">
    <property type="entry name" value="P-loop_NTPase"/>
</dbReference>
<dbReference type="InterPro" id="IPR005225">
    <property type="entry name" value="Small_GTP-bd"/>
</dbReference>
<dbReference type="InterPro" id="IPR001806">
    <property type="entry name" value="Small_GTPase"/>
</dbReference>
<dbReference type="InterPro" id="IPR003578">
    <property type="entry name" value="Small_GTPase_Rho"/>
</dbReference>
<dbReference type="NCBIfam" id="TIGR00231">
    <property type="entry name" value="small_GTP"/>
    <property type="match status" value="1"/>
</dbReference>
<dbReference type="PANTHER" id="PTHR24072">
    <property type="entry name" value="RHO FAMILY GTPASE"/>
    <property type="match status" value="1"/>
</dbReference>
<dbReference type="Pfam" id="PF00071">
    <property type="entry name" value="Ras"/>
    <property type="match status" value="1"/>
</dbReference>
<dbReference type="PRINTS" id="PR00449">
    <property type="entry name" value="RASTRNSFRMNG"/>
</dbReference>
<dbReference type="SMART" id="SM00175">
    <property type="entry name" value="RAB"/>
    <property type="match status" value="1"/>
</dbReference>
<dbReference type="SMART" id="SM00176">
    <property type="entry name" value="RAN"/>
    <property type="match status" value="1"/>
</dbReference>
<dbReference type="SMART" id="SM00173">
    <property type="entry name" value="RAS"/>
    <property type="match status" value="1"/>
</dbReference>
<dbReference type="SMART" id="SM00174">
    <property type="entry name" value="RHO"/>
    <property type="match status" value="1"/>
</dbReference>
<dbReference type="SUPFAM" id="SSF52540">
    <property type="entry name" value="P-loop containing nucleoside triphosphate hydrolases"/>
    <property type="match status" value="1"/>
</dbReference>
<dbReference type="PROSITE" id="PS51420">
    <property type="entry name" value="RHO"/>
    <property type="match status" value="1"/>
</dbReference>
<comment type="function">
    <text>Involved in hyphal formation, virulence, morphogenesis.</text>
</comment>
<comment type="subcellular location">
    <subcellularLocation>
        <location evidence="2">Cell membrane</location>
        <topology evidence="2">Lipid-anchor</topology>
        <orientation evidence="2">Cytoplasmic side</orientation>
    </subcellularLocation>
</comment>
<comment type="similarity">
    <text evidence="2">Belongs to the small GTPase superfamily. Rho family. CDC42 subfamily.</text>
</comment>